<dbReference type="EC" id="3.2.1.1" evidence="4"/>
<dbReference type="EMBL" id="AL513482">
    <property type="status" value="NOT_ANNOTATED_CDS"/>
    <property type="molecule type" value="Genomic_DNA"/>
</dbReference>
<dbReference type="CCDS" id="CCDS30784.1"/>
<dbReference type="RefSeq" id="NP_001008219.1">
    <property type="nucleotide sequence ID" value="NM_001008218.1"/>
</dbReference>
<dbReference type="RefSeq" id="NP_001008220.1">
    <property type="nucleotide sequence ID" value="NM_001008219.3"/>
</dbReference>
<dbReference type="RefSeq" id="NP_001008222.1">
    <property type="nucleotide sequence ID" value="NM_001008221.1"/>
</dbReference>
<dbReference type="RefSeq" id="NP_001333709.1">
    <property type="nucleotide sequence ID" value="NM_001346780.1"/>
</dbReference>
<dbReference type="RefSeq" id="NP_004029.2">
    <property type="nucleotide sequence ID" value="NM_004038.3"/>
</dbReference>
<dbReference type="RefSeq" id="XP_011539564.1">
    <property type="nucleotide sequence ID" value="XM_011541262.1"/>
</dbReference>
<dbReference type="RefSeq" id="XP_016856547.1">
    <property type="nucleotide sequence ID" value="XM_017001058.1"/>
</dbReference>
<dbReference type="SMR" id="P0DTE8"/>
<dbReference type="FunCoup" id="P0DTE8">
    <property type="interactions" value="125"/>
</dbReference>
<dbReference type="GlyConnect" id="28">
    <property type="glycosylation" value="4 N-Linked glycans"/>
</dbReference>
<dbReference type="GlyCosmos" id="P0DTE8">
    <property type="glycosylation" value="2 sites, 7 glycans"/>
</dbReference>
<dbReference type="GlyGen" id="P0DTE8">
    <property type="glycosylation" value="3 sites, 7 N-linked glycans (1 site)"/>
</dbReference>
<dbReference type="iPTMnet" id="P0DTE8"/>
<dbReference type="jPOST" id="P0DTE8"/>
<dbReference type="MassIVE" id="P0DTE8"/>
<dbReference type="DNASU" id="276"/>
<dbReference type="Ensembl" id="ENST00000370079.3">
    <property type="protein sequence ID" value="ENSP00000359096.3"/>
    <property type="gene ID" value="ENSG00000187733.7"/>
</dbReference>
<dbReference type="Ensembl" id="ENST00000622339.5">
    <property type="protein sequence ID" value="ENSP00000481450.2"/>
    <property type="gene ID" value="ENSG00000187733.7"/>
</dbReference>
<dbReference type="Ensembl" id="ENST00000684141.1">
    <property type="protein sequence ID" value="ENSP00000507077.1"/>
    <property type="gene ID" value="ENSG00000187733.7"/>
</dbReference>
<dbReference type="GeneID" id="276"/>
<dbReference type="GeneID" id="277"/>
<dbReference type="GeneID" id="278"/>
<dbReference type="KEGG" id="hsa:276"/>
<dbReference type="KEGG" id="hsa:277"/>
<dbReference type="KEGG" id="hsa:278"/>
<dbReference type="MANE-Select" id="ENST00000622339.5">
    <property type="protein sequence ID" value="ENSP00000481450.2"/>
    <property type="RefSeq nucleotide sequence ID" value="NM_001008219.3"/>
    <property type="RefSeq protein sequence ID" value="NP_001008220.1"/>
</dbReference>
<dbReference type="AGR" id="HGNC:474"/>
<dbReference type="AGR" id="HGNC:475"/>
<dbReference type="AGR" id="HGNC:476"/>
<dbReference type="CTD" id="276"/>
<dbReference type="CTD" id="277"/>
<dbReference type="CTD" id="278"/>
<dbReference type="DisGeNET" id="276"/>
<dbReference type="DisGeNET" id="277"/>
<dbReference type="DisGeNET" id="278"/>
<dbReference type="GeneCards" id="AMY1C"/>
<dbReference type="HGNC" id="HGNC:476">
    <property type="gene designation" value="AMY1C"/>
</dbReference>
<dbReference type="HPA" id="ENSG00000187733">
    <property type="expression patterns" value="Tissue enriched (salivary)"/>
</dbReference>
<dbReference type="MIM" id="104702">
    <property type="type" value="gene"/>
</dbReference>
<dbReference type="neXtProt" id="NX_P0DTE8"/>
<dbReference type="OpenTargets" id="ENSG00000187733"/>
<dbReference type="InParanoid" id="P0DTE8"/>
<dbReference type="OMA" id="GTHGVQS"/>
<dbReference type="OrthoDB" id="550577at2759"/>
<dbReference type="Reactome" id="R-HSA-189085">
    <property type="pathway name" value="Digestion of dietary carbohydrate"/>
</dbReference>
<dbReference type="SignaLink" id="P0DTE8"/>
<dbReference type="PRO" id="PR:P0DTE8"/>
<dbReference type="Proteomes" id="UP000005640">
    <property type="component" value="Chromosome 1"/>
</dbReference>
<dbReference type="Bgee" id="ENSG00000187733">
    <property type="expression patterns" value="Expressed in right uterine tube and 45 other cell types or tissues"/>
</dbReference>
<dbReference type="ExpressionAtlas" id="P0DTE8">
    <property type="expression patterns" value="baseline"/>
</dbReference>
<dbReference type="GO" id="GO:0070062">
    <property type="term" value="C:extracellular exosome"/>
    <property type="evidence" value="ECO:0007005"/>
    <property type="project" value="UniProtKB"/>
</dbReference>
<dbReference type="GO" id="GO:0005615">
    <property type="term" value="C:extracellular space"/>
    <property type="evidence" value="ECO:0000314"/>
    <property type="project" value="UniProtKB"/>
</dbReference>
<dbReference type="GO" id="GO:0004556">
    <property type="term" value="F:alpha-amylase activity"/>
    <property type="evidence" value="ECO:0000314"/>
    <property type="project" value="UniProtKB"/>
</dbReference>
<dbReference type="GO" id="GO:0005509">
    <property type="term" value="F:calcium ion binding"/>
    <property type="evidence" value="ECO:0000314"/>
    <property type="project" value="UniProtKB"/>
</dbReference>
<dbReference type="GO" id="GO:0031404">
    <property type="term" value="F:chloride ion binding"/>
    <property type="evidence" value="ECO:0000314"/>
    <property type="project" value="UniProtKB"/>
</dbReference>
<dbReference type="GO" id="GO:0005975">
    <property type="term" value="P:carbohydrate metabolic process"/>
    <property type="evidence" value="ECO:0000318"/>
    <property type="project" value="GO_Central"/>
</dbReference>
<dbReference type="GO" id="GO:0009311">
    <property type="term" value="P:oligosaccharide metabolic process"/>
    <property type="evidence" value="ECO:0000314"/>
    <property type="project" value="UniProtKB"/>
</dbReference>
<dbReference type="CDD" id="cd11317">
    <property type="entry name" value="AmyAc_bac_euk_AmyA"/>
    <property type="match status" value="1"/>
</dbReference>
<dbReference type="FunFam" id="2.60.40.1180:FF:000020">
    <property type="entry name" value="Pancreatic alpha-amylase"/>
    <property type="match status" value="1"/>
</dbReference>
<dbReference type="FunFam" id="3.20.20.80:FF:000056">
    <property type="entry name" value="Pancreatic alpha-amylase"/>
    <property type="match status" value="1"/>
</dbReference>
<dbReference type="Gene3D" id="3.20.20.80">
    <property type="entry name" value="Glycosidases"/>
    <property type="match status" value="1"/>
</dbReference>
<dbReference type="Gene3D" id="2.60.40.1180">
    <property type="entry name" value="Golgi alpha-mannosidase II"/>
    <property type="match status" value="1"/>
</dbReference>
<dbReference type="InterPro" id="IPR006048">
    <property type="entry name" value="A-amylase/branching_C"/>
</dbReference>
<dbReference type="InterPro" id="IPR031319">
    <property type="entry name" value="A-amylase_C"/>
</dbReference>
<dbReference type="InterPro" id="IPR006046">
    <property type="entry name" value="Alpha_amylase"/>
</dbReference>
<dbReference type="InterPro" id="IPR006047">
    <property type="entry name" value="Glyco_hydro_13_cat_dom"/>
</dbReference>
<dbReference type="InterPro" id="IPR013780">
    <property type="entry name" value="Glyco_hydro_b"/>
</dbReference>
<dbReference type="InterPro" id="IPR017853">
    <property type="entry name" value="Glycoside_hydrolase_SF"/>
</dbReference>
<dbReference type="PANTHER" id="PTHR43447">
    <property type="entry name" value="ALPHA-AMYLASE"/>
    <property type="match status" value="1"/>
</dbReference>
<dbReference type="Pfam" id="PF00128">
    <property type="entry name" value="Alpha-amylase"/>
    <property type="match status" value="1"/>
</dbReference>
<dbReference type="Pfam" id="PF02806">
    <property type="entry name" value="Alpha-amylase_C"/>
    <property type="match status" value="1"/>
</dbReference>
<dbReference type="PRINTS" id="PR00110">
    <property type="entry name" value="ALPHAAMYLASE"/>
</dbReference>
<dbReference type="SMART" id="SM00642">
    <property type="entry name" value="Aamy"/>
    <property type="match status" value="1"/>
</dbReference>
<dbReference type="SMART" id="SM00632">
    <property type="entry name" value="Aamy_C"/>
    <property type="match status" value="1"/>
</dbReference>
<dbReference type="SUPFAM" id="SSF51445">
    <property type="entry name" value="(Trans)glycosidases"/>
    <property type="match status" value="1"/>
</dbReference>
<dbReference type="SUPFAM" id="SSF51011">
    <property type="entry name" value="Glycosyl hydrolase domain"/>
    <property type="match status" value="1"/>
</dbReference>
<organism>
    <name type="scientific">Homo sapiens</name>
    <name type="common">Human</name>
    <dbReference type="NCBI Taxonomy" id="9606"/>
    <lineage>
        <taxon>Eukaryota</taxon>
        <taxon>Metazoa</taxon>
        <taxon>Chordata</taxon>
        <taxon>Craniata</taxon>
        <taxon>Vertebrata</taxon>
        <taxon>Euteleostomi</taxon>
        <taxon>Mammalia</taxon>
        <taxon>Eutheria</taxon>
        <taxon>Euarchontoglires</taxon>
        <taxon>Primates</taxon>
        <taxon>Haplorrhini</taxon>
        <taxon>Catarrhini</taxon>
        <taxon>Hominidae</taxon>
        <taxon>Homo</taxon>
    </lineage>
</organism>
<sequence>MKLFWLLFTIGFCWAQYSSNTQQGRTSIVHLFEWRWVDIALECERYLAPKGFGGVQVSPPNENVAIHNPFRPWWERYQPVSYKLCTRSGNEDEFRNMVTRCNNVGVRIYVDAVINHMCGNAVSAGTSSTCGSYFNPGSRDFPAVPYSGWDFNDGKCKTGSGDIENYNDATQVRDCRLSGLLDLALGKDYVRSKIAEYMNHLIDIGVAGFRIDASKHMWPGDIKAILDKLHNLNSNWFPEGSKPFIYQEVIDLGGEPIKSSDYFGNGRVTEFKYGAKLGTVIRKWNGEKMSYLKNWGEGWGFMPSDRALVFVDNHDNQRGHGAGGASILTFWDARLYKMAVGFMLAHPYGFTRVMSSYRWPRYFENGKDVNDWVGPPNDNGVTKEVTINPDTTCGNDWVCEHRWRQIRNMVNFRNVVDGQPFTNWYDNGSNQVAFGRGNRGFIVFNNDDWTFSLTLQTGLPAGTYCDVISGDKINGNCTGIKIYVSDDGKAHFSISNSAEDPFIAIHAESKL</sequence>
<evidence type="ECO:0000250" key="1">
    <source>
        <dbReference type="UniProtKB" id="P00687"/>
    </source>
</evidence>
<evidence type="ECO:0000250" key="2">
    <source>
        <dbReference type="UniProtKB" id="P04746"/>
    </source>
</evidence>
<evidence type="ECO:0000255" key="3"/>
<evidence type="ECO:0000269" key="4">
    <source>
    </source>
</evidence>
<evidence type="ECO:0000269" key="5">
    <source>
    </source>
</evidence>
<evidence type="ECO:0000269" key="6">
    <source>
    </source>
</evidence>
<evidence type="ECO:0000269" key="7">
    <source>
    </source>
</evidence>
<evidence type="ECO:0000305" key="8"/>
<evidence type="ECO:0000312" key="9">
    <source>
        <dbReference type="HGNC" id="HGNC:476"/>
    </source>
</evidence>
<accession>P0DTE8</accession>
<accession>A6NJS5</accession>
<accession>A8K8H6</accession>
<accession>P04745</accession>
<accession>Q13763</accession>
<accession>Q5T083</accession>
<reference key="1">
    <citation type="journal article" date="2006" name="Nature">
        <title>The DNA sequence and biological annotation of human chromosome 1.</title>
        <authorList>
            <person name="Gregory S.G."/>
            <person name="Barlow K.F."/>
            <person name="McLay K.E."/>
            <person name="Kaul R."/>
            <person name="Swarbreck D."/>
            <person name="Dunham A."/>
            <person name="Scott C.E."/>
            <person name="Howe K.L."/>
            <person name="Woodfine K."/>
            <person name="Spencer C.C.A."/>
            <person name="Jones M.C."/>
            <person name="Gillson C."/>
            <person name="Searle S."/>
            <person name="Zhou Y."/>
            <person name="Kokocinski F."/>
            <person name="McDonald L."/>
            <person name="Evans R."/>
            <person name="Phillips K."/>
            <person name="Atkinson A."/>
            <person name="Cooper R."/>
            <person name="Jones C."/>
            <person name="Hall R.E."/>
            <person name="Andrews T.D."/>
            <person name="Lloyd C."/>
            <person name="Ainscough R."/>
            <person name="Almeida J.P."/>
            <person name="Ambrose K.D."/>
            <person name="Anderson F."/>
            <person name="Andrew R.W."/>
            <person name="Ashwell R.I.S."/>
            <person name="Aubin K."/>
            <person name="Babbage A.K."/>
            <person name="Bagguley C.L."/>
            <person name="Bailey J."/>
            <person name="Beasley H."/>
            <person name="Bethel G."/>
            <person name="Bird C.P."/>
            <person name="Bray-Allen S."/>
            <person name="Brown J.Y."/>
            <person name="Brown A.J."/>
            <person name="Buckley D."/>
            <person name="Burton J."/>
            <person name="Bye J."/>
            <person name="Carder C."/>
            <person name="Chapman J.C."/>
            <person name="Clark S.Y."/>
            <person name="Clarke G."/>
            <person name="Clee C."/>
            <person name="Cobley V."/>
            <person name="Collier R.E."/>
            <person name="Corby N."/>
            <person name="Coville G.J."/>
            <person name="Davies J."/>
            <person name="Deadman R."/>
            <person name="Dunn M."/>
            <person name="Earthrowl M."/>
            <person name="Ellington A.G."/>
            <person name="Errington H."/>
            <person name="Frankish A."/>
            <person name="Frankland J."/>
            <person name="French L."/>
            <person name="Garner P."/>
            <person name="Garnett J."/>
            <person name="Gay L."/>
            <person name="Ghori M.R.J."/>
            <person name="Gibson R."/>
            <person name="Gilby L.M."/>
            <person name="Gillett W."/>
            <person name="Glithero R.J."/>
            <person name="Grafham D.V."/>
            <person name="Griffiths C."/>
            <person name="Griffiths-Jones S."/>
            <person name="Grocock R."/>
            <person name="Hammond S."/>
            <person name="Harrison E.S.I."/>
            <person name="Hart E."/>
            <person name="Haugen E."/>
            <person name="Heath P.D."/>
            <person name="Holmes S."/>
            <person name="Holt K."/>
            <person name="Howden P.J."/>
            <person name="Hunt A.R."/>
            <person name="Hunt S.E."/>
            <person name="Hunter G."/>
            <person name="Isherwood J."/>
            <person name="James R."/>
            <person name="Johnson C."/>
            <person name="Johnson D."/>
            <person name="Joy A."/>
            <person name="Kay M."/>
            <person name="Kershaw J.K."/>
            <person name="Kibukawa M."/>
            <person name="Kimberley A.M."/>
            <person name="King A."/>
            <person name="Knights A.J."/>
            <person name="Lad H."/>
            <person name="Laird G."/>
            <person name="Lawlor S."/>
            <person name="Leongamornlert D.A."/>
            <person name="Lloyd D.M."/>
            <person name="Loveland J."/>
            <person name="Lovell J."/>
            <person name="Lush M.J."/>
            <person name="Lyne R."/>
            <person name="Martin S."/>
            <person name="Mashreghi-Mohammadi M."/>
            <person name="Matthews L."/>
            <person name="Matthews N.S.W."/>
            <person name="McLaren S."/>
            <person name="Milne S."/>
            <person name="Mistry S."/>
            <person name="Moore M.J.F."/>
            <person name="Nickerson T."/>
            <person name="O'Dell C.N."/>
            <person name="Oliver K."/>
            <person name="Palmeiri A."/>
            <person name="Palmer S.A."/>
            <person name="Parker A."/>
            <person name="Patel D."/>
            <person name="Pearce A.V."/>
            <person name="Peck A.I."/>
            <person name="Pelan S."/>
            <person name="Phelps K."/>
            <person name="Phillimore B.J."/>
            <person name="Plumb R."/>
            <person name="Rajan J."/>
            <person name="Raymond C."/>
            <person name="Rouse G."/>
            <person name="Saenphimmachak C."/>
            <person name="Sehra H.K."/>
            <person name="Sheridan E."/>
            <person name="Shownkeen R."/>
            <person name="Sims S."/>
            <person name="Skuce C.D."/>
            <person name="Smith M."/>
            <person name="Steward C."/>
            <person name="Subramanian S."/>
            <person name="Sycamore N."/>
            <person name="Tracey A."/>
            <person name="Tromans A."/>
            <person name="Van Helmond Z."/>
            <person name="Wall M."/>
            <person name="Wallis J.M."/>
            <person name="White S."/>
            <person name="Whitehead S.L."/>
            <person name="Wilkinson J.E."/>
            <person name="Willey D.L."/>
            <person name="Williams H."/>
            <person name="Wilming L."/>
            <person name="Wray P.W."/>
            <person name="Wu Z."/>
            <person name="Coulson A."/>
            <person name="Vaudin M."/>
            <person name="Sulston J.E."/>
            <person name="Durbin R.M."/>
            <person name="Hubbard T."/>
            <person name="Wooster R."/>
            <person name="Dunham I."/>
            <person name="Carter N.P."/>
            <person name="McVean G."/>
            <person name="Ross M.T."/>
            <person name="Harrow J."/>
            <person name="Olson M.V."/>
            <person name="Beck S."/>
            <person name="Rogers J."/>
            <person name="Bentley D.R."/>
        </authorList>
    </citation>
    <scope>NUCLEOTIDE SEQUENCE [LARGE SCALE GENOMIC DNA]</scope>
</reference>
<reference key="2">
    <citation type="journal article" date="1991" name="Electrophoresis">
        <title>Electrophoretic characterization of posttranslational modifications of human parotid salivary alpha-amylase.</title>
        <authorList>
            <person name="Bank R.A."/>
            <person name="Hettema E.H."/>
            <person name="Arwert F."/>
            <person name="Amerongen A.V."/>
            <person name="Pronk J.C."/>
        </authorList>
    </citation>
    <scope>GLYCOSYLATION AT ASN-427</scope>
    <scope>DEAMIDATION AT ASN-365; ASN-427 AND ASN-474</scope>
</reference>
<reference key="3">
    <citation type="journal article" date="2006" name="J. Proteome Res.">
        <title>Identification of N-linked glycoproteins in human saliva by glycoprotein capture and mass spectrometry.</title>
        <authorList>
            <person name="Ramachandran P."/>
            <person name="Boontheung P."/>
            <person name="Xie Y."/>
            <person name="Sondej M."/>
            <person name="Wong D.T."/>
            <person name="Loo J.A."/>
        </authorList>
    </citation>
    <scope>GLYCOSYLATION [LARGE SCALE ANALYSIS] AT ASN-427</scope>
    <source>
        <tissue>Saliva</tissue>
    </source>
</reference>
<reference key="4">
    <citation type="journal article" date="1996" name="Acta Crystallogr. D">
        <title>Structure of human salivary alpha-amylase at 1.6-A resolution: implications for its role in the oral cavity.</title>
        <authorList>
            <person name="Ramasubbu N."/>
            <person name="Paloth V."/>
            <person name="Luo Y."/>
            <person name="Brayer G.D."/>
            <person name="Levine M.J."/>
        </authorList>
    </citation>
    <scope>X-RAY CRYSTALLOGRAPHY (1.60 ANGSTROMS) OF 17-511 IN COMPLEX WITH CALCIUM AND CHLORIDE</scope>
    <scope>DISULFIDE BONDS</scope>
    <scope>COFACTOR</scope>
</reference>
<reference key="5">
    <citation type="journal article" date="2003" name="J. Mol. Biol.">
        <title>Probing the role of a mobile loop in substrate binding and enzyme activity of human salivary amylase.</title>
        <authorList>
            <person name="Ramasubbu N."/>
            <person name="Ragunath C."/>
            <person name="Mishra P.J."/>
        </authorList>
    </citation>
    <scope>X-RAY CRYSTALLOGRAPHY (1.90 ANGSTROMS) OF 16-511 OF WILD-TYPE AND MUTANT 321-GLY--ALA-325 DEL IN COMPLEX WITH CALCIUM AND CHLORIDE</scope>
    <scope>CATALYTIC ACTIVITY</scope>
    <scope>DISULFIDE BONDS</scope>
</reference>
<feature type="signal peptide" evidence="3">
    <location>
        <begin position="1"/>
        <end position="15"/>
    </location>
</feature>
<feature type="chain" id="PRO_0000450821" description="Alpha-amylase 1C">
    <location>
        <begin position="16"/>
        <end position="511"/>
    </location>
</feature>
<feature type="active site" description="Nucleophile">
    <location>
        <position position="212"/>
    </location>
</feature>
<feature type="active site" description="Proton donor">
    <location>
        <position position="248"/>
    </location>
</feature>
<feature type="binding site" evidence="4 5">
    <location>
        <position position="115"/>
    </location>
    <ligand>
        <name>Ca(2+)</name>
        <dbReference type="ChEBI" id="CHEBI:29108"/>
    </ligand>
</feature>
<feature type="binding site" evidence="4 5">
    <location>
        <position position="173"/>
    </location>
    <ligand>
        <name>Ca(2+)</name>
        <dbReference type="ChEBI" id="CHEBI:29108"/>
    </ligand>
</feature>
<feature type="binding site" evidence="4 5">
    <location>
        <position position="182"/>
    </location>
    <ligand>
        <name>Ca(2+)</name>
        <dbReference type="ChEBI" id="CHEBI:29108"/>
    </ligand>
</feature>
<feature type="binding site" evidence="4 5">
    <location>
        <position position="210"/>
    </location>
    <ligand>
        <name>chloride</name>
        <dbReference type="ChEBI" id="CHEBI:17996"/>
    </ligand>
</feature>
<feature type="binding site" evidence="4 5">
    <location>
        <position position="216"/>
    </location>
    <ligand>
        <name>Ca(2+)</name>
        <dbReference type="ChEBI" id="CHEBI:29108"/>
    </ligand>
</feature>
<feature type="binding site" evidence="4 5">
    <location>
        <position position="313"/>
    </location>
    <ligand>
        <name>chloride</name>
        <dbReference type="ChEBI" id="CHEBI:17996"/>
    </ligand>
</feature>
<feature type="binding site" evidence="4 5">
    <location>
        <position position="352"/>
    </location>
    <ligand>
        <name>chloride</name>
        <dbReference type="ChEBI" id="CHEBI:17996"/>
    </ligand>
</feature>
<feature type="site" description="Transition state stabilizer" evidence="2">
    <location>
        <position position="315"/>
    </location>
</feature>
<feature type="modified residue" description="Pyrrolidone carboxylic acid" evidence="1">
    <location>
        <position position="16"/>
    </location>
</feature>
<feature type="modified residue" description="Deamidated asparagine; partial" evidence="7">
    <location>
        <position position="365"/>
    </location>
</feature>
<feature type="modified residue" description="Deamidated asparagine; partial; alternate" evidence="7">
    <location>
        <position position="427"/>
    </location>
</feature>
<feature type="modified residue" description="Deamidated asparagine; partial" evidence="7">
    <location>
        <position position="474"/>
    </location>
</feature>
<feature type="glycosylation site" description="N-linked (GlcNAc...) asparagine" evidence="6 7">
    <location>
        <position position="427"/>
    </location>
</feature>
<feature type="glycosylation site" description="N-linked (GlcNAc...) asparagine" evidence="3">
    <location>
        <position position="476"/>
    </location>
</feature>
<feature type="disulfide bond" evidence="4 5">
    <location>
        <begin position="43"/>
        <end position="101"/>
    </location>
</feature>
<feature type="disulfide bond" evidence="4 5">
    <location>
        <begin position="85"/>
        <end position="130"/>
    </location>
</feature>
<feature type="disulfide bond" evidence="4 5">
    <location>
        <begin position="156"/>
        <end position="175"/>
    </location>
</feature>
<feature type="disulfide bond">
    <location>
        <begin position="393"/>
        <end position="399"/>
    </location>
</feature>
<feature type="disulfide bond" evidence="4 5">
    <location>
        <begin position="465"/>
        <end position="477"/>
    </location>
</feature>
<gene>
    <name evidence="9" type="primary">AMY1C</name>
    <name type="synonym">AMY1</name>
</gene>
<name>AMY1C_HUMAN</name>
<keyword id="KW-0106">Calcium</keyword>
<keyword id="KW-0119">Carbohydrate metabolism</keyword>
<keyword id="KW-0868">Chloride</keyword>
<keyword id="KW-1015">Disulfide bond</keyword>
<keyword id="KW-0325">Glycoprotein</keyword>
<keyword id="KW-0326">Glycosidase</keyword>
<keyword id="KW-0378">Hydrolase</keyword>
<keyword id="KW-0479">Metal-binding</keyword>
<keyword id="KW-0873">Pyrrolidone carboxylic acid</keyword>
<keyword id="KW-1185">Reference proteome</keyword>
<keyword id="KW-0964">Secreted</keyword>
<keyword id="KW-0732">Signal</keyword>
<proteinExistence type="evidence at protein level"/>
<protein>
    <recommendedName>
        <fullName>Alpha-amylase 1C</fullName>
        <ecNumber evidence="4">3.2.1.1</ecNumber>
    </recommendedName>
</protein>
<comment type="function">
    <text evidence="4">Calcium-binding enzyme that initiates starch digestion in the oral cavity (PubMed:12527308). Catalyzes the hydrolysis of internal (1-&gt;4)-alpha-D-glucosidic bonds, yielding a mixture of maltose, isomaltose, small amounts of glucose as well as small linear and branched oligosaccharides called dextrins (PubMed:12527308).</text>
</comment>
<comment type="catalytic activity">
    <reaction evidence="4">
        <text>Endohydrolysis of (1-&gt;4)-alpha-D-glucosidic linkages in polysaccharides containing three or more (1-&gt;4)-alpha-linked D-glucose units.</text>
        <dbReference type="EC" id="3.2.1.1"/>
    </reaction>
</comment>
<comment type="cofactor">
    <cofactor evidence="4 5">
        <name>Ca(2+)</name>
        <dbReference type="ChEBI" id="CHEBI:29108"/>
    </cofactor>
    <text evidence="4 5">Binds 1 Ca(2+) ion per subunit.</text>
</comment>
<comment type="cofactor">
    <cofactor evidence="4 5">
        <name>chloride</name>
        <dbReference type="ChEBI" id="CHEBI:17996"/>
    </cofactor>
    <text evidence="4 5">Binds 1 Cl(-) ion per subunit.</text>
</comment>
<comment type="subunit">
    <text>Monomer.</text>
</comment>
<comment type="subcellular location">
    <subcellularLocation>
        <location evidence="8">Secreted</location>
    </subcellularLocation>
</comment>
<comment type="similarity">
    <text evidence="8">Belongs to the glycosyl hydrolase 13 family.</text>
</comment>
<comment type="caution">
    <text evidence="8">Three distinct genes (AMY1A, AMY1B and AMY1C), located in a gene cluster on 1p21, encode proteins sharing the same peptidic sequence.</text>
</comment>
<comment type="online information" name="Wikipedia">
    <link uri="https://en.wikipedia.org/wiki/Amylase"/>
    <text>Amylase entry</text>
</comment>